<evidence type="ECO:0000250" key="1"/>
<evidence type="ECO:0000255" key="2">
    <source>
        <dbReference type="HAMAP-Rule" id="MF_00047"/>
    </source>
</evidence>
<sequence length="360" mass="39946">MKISLGLIYGGKSAEHNVSLQTALAVTKALNTEKFDIHPIYITEEGEWLRGEKLTEPVSNVRMLQFEQNAKTFLPTSLNESMFPQPTSADEKIDVVFPLLHGPNGEDGTMQGLLELLNIPYVGNGVLASAAGMDKVMMKDVFAQAGLAQAKHLSFNKKDYEKATPDSLEQVEQVLGYPCFVKPANMGSSVGISKCRSKEELQTAFDLAFQYDRRVVVEEGVVGREIEIGVLGNDEPKCSVVGEIAPKTDFYDYKAKYEDGDTDLIIPASVSEDEYKTIHDMAIKAFKSLDGSGLVRADFFLTEKGEVLINEVNTMPGFTPFSMFPLLWKHTGVEYPELIEKLVSLAIERHQEKQTIKTTF</sequence>
<organism>
    <name type="scientific">Bacillus pumilus (strain SAFR-032)</name>
    <dbReference type="NCBI Taxonomy" id="315750"/>
    <lineage>
        <taxon>Bacteria</taxon>
        <taxon>Bacillati</taxon>
        <taxon>Bacillota</taxon>
        <taxon>Bacilli</taxon>
        <taxon>Bacillales</taxon>
        <taxon>Bacillaceae</taxon>
        <taxon>Bacillus</taxon>
    </lineage>
</organism>
<comment type="function">
    <text evidence="2">Cell wall formation.</text>
</comment>
<comment type="catalytic activity">
    <reaction evidence="2">
        <text>2 D-alanine + ATP = D-alanyl-D-alanine + ADP + phosphate + H(+)</text>
        <dbReference type="Rhea" id="RHEA:11224"/>
        <dbReference type="ChEBI" id="CHEBI:15378"/>
        <dbReference type="ChEBI" id="CHEBI:30616"/>
        <dbReference type="ChEBI" id="CHEBI:43474"/>
        <dbReference type="ChEBI" id="CHEBI:57416"/>
        <dbReference type="ChEBI" id="CHEBI:57822"/>
        <dbReference type="ChEBI" id="CHEBI:456216"/>
        <dbReference type="EC" id="6.3.2.4"/>
    </reaction>
</comment>
<comment type="cofactor">
    <cofactor evidence="1">
        <name>Mg(2+)</name>
        <dbReference type="ChEBI" id="CHEBI:18420"/>
    </cofactor>
    <cofactor evidence="1">
        <name>Mn(2+)</name>
        <dbReference type="ChEBI" id="CHEBI:29035"/>
    </cofactor>
    <text evidence="1">Binds 2 magnesium or manganese ions per subunit.</text>
</comment>
<comment type="pathway">
    <text evidence="2">Cell wall biogenesis; peptidoglycan biosynthesis.</text>
</comment>
<comment type="subcellular location">
    <subcellularLocation>
        <location evidence="2">Cytoplasm</location>
    </subcellularLocation>
</comment>
<comment type="similarity">
    <text evidence="2">Belongs to the D-alanine--D-alanine ligase family.</text>
</comment>
<protein>
    <recommendedName>
        <fullName evidence="2">D-alanine--D-alanine ligase</fullName>
        <ecNumber evidence="2">6.3.2.4</ecNumber>
    </recommendedName>
    <alternativeName>
        <fullName evidence="2">D-Ala-D-Ala ligase</fullName>
    </alternativeName>
    <alternativeName>
        <fullName evidence="2">D-alanylalanine synthetase</fullName>
    </alternativeName>
</protein>
<accession>A8FA55</accession>
<name>DDL_BACP2</name>
<dbReference type="EC" id="6.3.2.4" evidence="2"/>
<dbReference type="EMBL" id="CP000813">
    <property type="protein sequence ID" value="ABV61122.1"/>
    <property type="molecule type" value="Genomic_DNA"/>
</dbReference>
<dbReference type="RefSeq" id="WP_012008984.1">
    <property type="nucleotide sequence ID" value="NZ_VEIS01000004.1"/>
</dbReference>
<dbReference type="SMR" id="A8FA55"/>
<dbReference type="STRING" id="315750.BPUM_0427"/>
<dbReference type="GeneID" id="5619679"/>
<dbReference type="KEGG" id="bpu:BPUM_0427"/>
<dbReference type="eggNOG" id="COG1181">
    <property type="taxonomic scope" value="Bacteria"/>
</dbReference>
<dbReference type="HOGENOM" id="CLU_039268_0_0_9"/>
<dbReference type="OrthoDB" id="9813261at2"/>
<dbReference type="UniPathway" id="UPA00219"/>
<dbReference type="Proteomes" id="UP000001355">
    <property type="component" value="Chromosome"/>
</dbReference>
<dbReference type="GO" id="GO:0005829">
    <property type="term" value="C:cytosol"/>
    <property type="evidence" value="ECO:0007669"/>
    <property type="project" value="TreeGrafter"/>
</dbReference>
<dbReference type="GO" id="GO:0005524">
    <property type="term" value="F:ATP binding"/>
    <property type="evidence" value="ECO:0007669"/>
    <property type="project" value="UniProtKB-KW"/>
</dbReference>
<dbReference type="GO" id="GO:0008716">
    <property type="term" value="F:D-alanine-D-alanine ligase activity"/>
    <property type="evidence" value="ECO:0007669"/>
    <property type="project" value="UniProtKB-UniRule"/>
</dbReference>
<dbReference type="GO" id="GO:0046872">
    <property type="term" value="F:metal ion binding"/>
    <property type="evidence" value="ECO:0007669"/>
    <property type="project" value="UniProtKB-KW"/>
</dbReference>
<dbReference type="GO" id="GO:0071555">
    <property type="term" value="P:cell wall organization"/>
    <property type="evidence" value="ECO:0007669"/>
    <property type="project" value="UniProtKB-KW"/>
</dbReference>
<dbReference type="GO" id="GO:0009252">
    <property type="term" value="P:peptidoglycan biosynthetic process"/>
    <property type="evidence" value="ECO:0007669"/>
    <property type="project" value="UniProtKB-UniRule"/>
</dbReference>
<dbReference type="GO" id="GO:0008360">
    <property type="term" value="P:regulation of cell shape"/>
    <property type="evidence" value="ECO:0007669"/>
    <property type="project" value="UniProtKB-KW"/>
</dbReference>
<dbReference type="FunFam" id="3.30.1490.20:FF:000007">
    <property type="entry name" value="D-alanine--D-alanine ligase"/>
    <property type="match status" value="1"/>
</dbReference>
<dbReference type="FunFam" id="3.30.470.20:FF:000008">
    <property type="entry name" value="D-alanine--D-alanine ligase"/>
    <property type="match status" value="1"/>
</dbReference>
<dbReference type="Gene3D" id="3.40.50.20">
    <property type="match status" value="1"/>
</dbReference>
<dbReference type="Gene3D" id="3.30.1490.20">
    <property type="entry name" value="ATP-grasp fold, A domain"/>
    <property type="match status" value="1"/>
</dbReference>
<dbReference type="Gene3D" id="3.30.470.20">
    <property type="entry name" value="ATP-grasp fold, B domain"/>
    <property type="match status" value="1"/>
</dbReference>
<dbReference type="HAMAP" id="MF_00047">
    <property type="entry name" value="Dala_Dala_lig"/>
    <property type="match status" value="1"/>
</dbReference>
<dbReference type="InterPro" id="IPR011761">
    <property type="entry name" value="ATP-grasp"/>
</dbReference>
<dbReference type="InterPro" id="IPR013815">
    <property type="entry name" value="ATP_grasp_subdomain_1"/>
</dbReference>
<dbReference type="InterPro" id="IPR000291">
    <property type="entry name" value="D-Ala_lig_Van_CS"/>
</dbReference>
<dbReference type="InterPro" id="IPR005905">
    <property type="entry name" value="D_ala_D_ala"/>
</dbReference>
<dbReference type="InterPro" id="IPR011095">
    <property type="entry name" value="Dala_Dala_lig_C"/>
</dbReference>
<dbReference type="InterPro" id="IPR011127">
    <property type="entry name" value="Dala_Dala_lig_N"/>
</dbReference>
<dbReference type="InterPro" id="IPR016185">
    <property type="entry name" value="PreATP-grasp_dom_sf"/>
</dbReference>
<dbReference type="NCBIfam" id="TIGR01205">
    <property type="entry name" value="D_ala_D_alaTIGR"/>
    <property type="match status" value="1"/>
</dbReference>
<dbReference type="NCBIfam" id="NF002378">
    <property type="entry name" value="PRK01372.1"/>
    <property type="match status" value="1"/>
</dbReference>
<dbReference type="NCBIfam" id="NF002526">
    <property type="entry name" value="PRK01966.1-2"/>
    <property type="match status" value="1"/>
</dbReference>
<dbReference type="NCBIfam" id="NF002528">
    <property type="entry name" value="PRK01966.1-4"/>
    <property type="match status" value="1"/>
</dbReference>
<dbReference type="PANTHER" id="PTHR23132">
    <property type="entry name" value="D-ALANINE--D-ALANINE LIGASE"/>
    <property type="match status" value="1"/>
</dbReference>
<dbReference type="PANTHER" id="PTHR23132:SF25">
    <property type="entry name" value="D-ALANINE--D-ALANINE LIGASE A"/>
    <property type="match status" value="1"/>
</dbReference>
<dbReference type="Pfam" id="PF07478">
    <property type="entry name" value="Dala_Dala_lig_C"/>
    <property type="match status" value="1"/>
</dbReference>
<dbReference type="Pfam" id="PF01820">
    <property type="entry name" value="Dala_Dala_lig_N"/>
    <property type="match status" value="1"/>
</dbReference>
<dbReference type="PIRSF" id="PIRSF039102">
    <property type="entry name" value="Ddl/VanB"/>
    <property type="match status" value="1"/>
</dbReference>
<dbReference type="SUPFAM" id="SSF56059">
    <property type="entry name" value="Glutathione synthetase ATP-binding domain-like"/>
    <property type="match status" value="1"/>
</dbReference>
<dbReference type="SUPFAM" id="SSF52440">
    <property type="entry name" value="PreATP-grasp domain"/>
    <property type="match status" value="1"/>
</dbReference>
<dbReference type="PROSITE" id="PS50975">
    <property type="entry name" value="ATP_GRASP"/>
    <property type="match status" value="1"/>
</dbReference>
<dbReference type="PROSITE" id="PS00843">
    <property type="entry name" value="DALA_DALA_LIGASE_1"/>
    <property type="match status" value="1"/>
</dbReference>
<dbReference type="PROSITE" id="PS00844">
    <property type="entry name" value="DALA_DALA_LIGASE_2"/>
    <property type="match status" value="1"/>
</dbReference>
<feature type="chain" id="PRO_1000057320" description="D-alanine--D-alanine ligase">
    <location>
        <begin position="1"/>
        <end position="360"/>
    </location>
</feature>
<feature type="domain" description="ATP-grasp" evidence="2">
    <location>
        <begin position="139"/>
        <end position="344"/>
    </location>
</feature>
<feature type="binding site" evidence="2">
    <location>
        <begin position="172"/>
        <end position="227"/>
    </location>
    <ligand>
        <name>ATP</name>
        <dbReference type="ChEBI" id="CHEBI:30616"/>
    </ligand>
</feature>
<feature type="binding site" evidence="2">
    <location>
        <position position="298"/>
    </location>
    <ligand>
        <name>Mg(2+)</name>
        <dbReference type="ChEBI" id="CHEBI:18420"/>
        <label>1</label>
    </ligand>
</feature>
<feature type="binding site" evidence="2">
    <location>
        <position position="311"/>
    </location>
    <ligand>
        <name>Mg(2+)</name>
        <dbReference type="ChEBI" id="CHEBI:18420"/>
        <label>1</label>
    </ligand>
</feature>
<feature type="binding site" evidence="2">
    <location>
        <position position="311"/>
    </location>
    <ligand>
        <name>Mg(2+)</name>
        <dbReference type="ChEBI" id="CHEBI:18420"/>
        <label>2</label>
    </ligand>
</feature>
<feature type="binding site" evidence="2">
    <location>
        <position position="313"/>
    </location>
    <ligand>
        <name>Mg(2+)</name>
        <dbReference type="ChEBI" id="CHEBI:18420"/>
        <label>2</label>
    </ligand>
</feature>
<reference key="1">
    <citation type="journal article" date="2007" name="PLoS ONE">
        <title>Paradoxical DNA repair and peroxide resistance gene conservation in Bacillus pumilus SAFR-032.</title>
        <authorList>
            <person name="Gioia J."/>
            <person name="Yerrapragada S."/>
            <person name="Qin X."/>
            <person name="Jiang H."/>
            <person name="Igboeli O.C."/>
            <person name="Muzny D."/>
            <person name="Dugan-Rocha S."/>
            <person name="Ding Y."/>
            <person name="Hawes A."/>
            <person name="Liu W."/>
            <person name="Perez L."/>
            <person name="Kovar C."/>
            <person name="Dinh H."/>
            <person name="Lee S."/>
            <person name="Nazareth L."/>
            <person name="Blyth P."/>
            <person name="Holder M."/>
            <person name="Buhay C."/>
            <person name="Tirumalai M.R."/>
            <person name="Liu Y."/>
            <person name="Dasgupta I."/>
            <person name="Bokhetache L."/>
            <person name="Fujita M."/>
            <person name="Karouia F."/>
            <person name="Eswara Moorthy P."/>
            <person name="Siefert J."/>
            <person name="Uzman A."/>
            <person name="Buzumbo P."/>
            <person name="Verma A."/>
            <person name="Zwiya H."/>
            <person name="McWilliams B.D."/>
            <person name="Olowu A."/>
            <person name="Clinkenbeard K.D."/>
            <person name="Newcombe D."/>
            <person name="Golebiewski L."/>
            <person name="Petrosino J.F."/>
            <person name="Nicholson W.L."/>
            <person name="Fox G.E."/>
            <person name="Venkateswaran K."/>
            <person name="Highlander S.K."/>
            <person name="Weinstock G.M."/>
        </authorList>
    </citation>
    <scope>NUCLEOTIDE SEQUENCE [LARGE SCALE GENOMIC DNA]</scope>
    <source>
        <strain>SAFR-032</strain>
    </source>
</reference>
<proteinExistence type="inferred from homology"/>
<gene>
    <name evidence="2" type="primary">ddl</name>
    <name type="ordered locus">BPUM_0427</name>
</gene>
<keyword id="KW-0067">ATP-binding</keyword>
<keyword id="KW-0133">Cell shape</keyword>
<keyword id="KW-0961">Cell wall biogenesis/degradation</keyword>
<keyword id="KW-0963">Cytoplasm</keyword>
<keyword id="KW-0436">Ligase</keyword>
<keyword id="KW-0460">Magnesium</keyword>
<keyword id="KW-0464">Manganese</keyword>
<keyword id="KW-0479">Metal-binding</keyword>
<keyword id="KW-0547">Nucleotide-binding</keyword>
<keyword id="KW-0573">Peptidoglycan synthesis</keyword>